<accession>O03206</accession>
<organism>
    <name type="scientific">Ceratotherium simum</name>
    <name type="common">White rhinoceros</name>
    <name type="synonym">Square-lipped rhinoceros</name>
    <dbReference type="NCBI Taxonomy" id="9807"/>
    <lineage>
        <taxon>Eukaryota</taxon>
        <taxon>Metazoa</taxon>
        <taxon>Chordata</taxon>
        <taxon>Craniata</taxon>
        <taxon>Vertebrata</taxon>
        <taxon>Euteleostomi</taxon>
        <taxon>Mammalia</taxon>
        <taxon>Eutheria</taxon>
        <taxon>Laurasiatheria</taxon>
        <taxon>Perissodactyla</taxon>
        <taxon>Rhinocerotidae</taxon>
        <taxon>Ceratotherium</taxon>
    </lineage>
</organism>
<keyword id="KW-0249">Electron transport</keyword>
<keyword id="KW-0472">Membrane</keyword>
<keyword id="KW-0496">Mitochondrion</keyword>
<keyword id="KW-0999">Mitochondrion inner membrane</keyword>
<keyword id="KW-0520">NAD</keyword>
<keyword id="KW-0679">Respiratory chain</keyword>
<keyword id="KW-1278">Translocase</keyword>
<keyword id="KW-0812">Transmembrane</keyword>
<keyword id="KW-1133">Transmembrane helix</keyword>
<keyword id="KW-0813">Transport</keyword>
<keyword id="KW-0830">Ubiquinone</keyword>
<comment type="function">
    <text evidence="1">Core subunit of the mitochondrial membrane respiratory chain NADH dehydrogenase (Complex I) which catalyzes electron transfer from NADH through the respiratory chain, using ubiquinone as an electron acceptor. Essential for the catalytic activity and assembly of complex I.</text>
</comment>
<comment type="catalytic activity">
    <reaction evidence="1">
        <text>a ubiquinone + NADH + 5 H(+)(in) = a ubiquinol + NAD(+) + 4 H(+)(out)</text>
        <dbReference type="Rhea" id="RHEA:29091"/>
        <dbReference type="Rhea" id="RHEA-COMP:9565"/>
        <dbReference type="Rhea" id="RHEA-COMP:9566"/>
        <dbReference type="ChEBI" id="CHEBI:15378"/>
        <dbReference type="ChEBI" id="CHEBI:16389"/>
        <dbReference type="ChEBI" id="CHEBI:17976"/>
        <dbReference type="ChEBI" id="CHEBI:57540"/>
        <dbReference type="ChEBI" id="CHEBI:57945"/>
        <dbReference type="EC" id="7.1.1.2"/>
    </reaction>
</comment>
<comment type="subunit">
    <text evidence="2">Core subunit of respiratory chain NADH dehydrogenase (Complex I) which is composed of 45 different subunits.</text>
</comment>
<comment type="subcellular location">
    <subcellularLocation>
        <location evidence="2">Mitochondrion inner membrane</location>
        <topology evidence="3">Multi-pass membrane protein</topology>
    </subcellularLocation>
</comment>
<comment type="similarity">
    <text evidence="4">Belongs to the complex I subunit 6 family.</text>
</comment>
<reference key="1">
    <citation type="journal article" date="1997" name="Mol. Phylogenet. Evol.">
        <title>The complete mitochondrial DNA sequence of the white rhinoceros, Ceratotherium simum, and comparison with the mtDNA sequence of the Indian rhinoceros, Rhinoceros unicornis.</title>
        <authorList>
            <person name="Xu X."/>
            <person name="Arnason U."/>
        </authorList>
    </citation>
    <scope>NUCLEOTIDE SEQUENCE [GENOMIC DNA]</scope>
</reference>
<feature type="chain" id="PRO_0000118265" description="NADH-ubiquinone oxidoreductase chain 6">
    <location>
        <begin position="1"/>
        <end position="175"/>
    </location>
</feature>
<feature type="transmembrane region" description="Helical" evidence="3">
    <location>
        <begin position="1"/>
        <end position="21"/>
    </location>
</feature>
<feature type="transmembrane region" description="Helical" evidence="3">
    <location>
        <begin position="25"/>
        <end position="45"/>
    </location>
</feature>
<feature type="transmembrane region" description="Helical" evidence="3">
    <location>
        <begin position="47"/>
        <end position="67"/>
    </location>
</feature>
<feature type="transmembrane region" description="Helical" evidence="3">
    <location>
        <begin position="87"/>
        <end position="107"/>
    </location>
</feature>
<feature type="transmembrane region" description="Helical" evidence="3">
    <location>
        <begin position="116"/>
        <end position="136"/>
    </location>
</feature>
<feature type="transmembrane region" description="Helical" evidence="3">
    <location>
        <begin position="149"/>
        <end position="169"/>
    </location>
</feature>
<geneLocation type="mitochondrion"/>
<dbReference type="EC" id="7.1.1.2" evidence="1"/>
<dbReference type="EMBL" id="Y07726">
    <property type="protein sequence ID" value="CAA69017.1"/>
    <property type="molecule type" value="Genomic_DNA"/>
</dbReference>
<dbReference type="RefSeq" id="NP_007444.1">
    <property type="nucleotide sequence ID" value="NC_001808.1"/>
</dbReference>
<dbReference type="SMR" id="O03206"/>
<dbReference type="GeneID" id="808108"/>
<dbReference type="CTD" id="4541"/>
<dbReference type="OMA" id="WVIYDTG"/>
<dbReference type="GO" id="GO:0005743">
    <property type="term" value="C:mitochondrial inner membrane"/>
    <property type="evidence" value="ECO:0000250"/>
    <property type="project" value="UniProtKB"/>
</dbReference>
<dbReference type="GO" id="GO:0008137">
    <property type="term" value="F:NADH dehydrogenase (ubiquinone) activity"/>
    <property type="evidence" value="ECO:0000250"/>
    <property type="project" value="UniProtKB"/>
</dbReference>
<dbReference type="GO" id="GO:0006120">
    <property type="term" value="P:mitochondrial electron transport, NADH to ubiquinone"/>
    <property type="evidence" value="ECO:0000250"/>
    <property type="project" value="UniProtKB"/>
</dbReference>
<dbReference type="GO" id="GO:0032981">
    <property type="term" value="P:mitochondrial respiratory chain complex I assembly"/>
    <property type="evidence" value="ECO:0000250"/>
    <property type="project" value="UniProtKB"/>
</dbReference>
<dbReference type="Gene3D" id="1.20.120.1200">
    <property type="entry name" value="NADH-ubiquinone/plastoquinone oxidoreductase chain 6, subunit NuoJ"/>
    <property type="match status" value="1"/>
</dbReference>
<dbReference type="InterPro" id="IPR050269">
    <property type="entry name" value="ComplexI_Subunit6"/>
</dbReference>
<dbReference type="InterPro" id="IPR001457">
    <property type="entry name" value="NADH_UbQ/plastoQ_OxRdtase_su6"/>
</dbReference>
<dbReference type="InterPro" id="IPR042106">
    <property type="entry name" value="Nuo/plastoQ_OxRdtase_6_NuoJ"/>
</dbReference>
<dbReference type="PANTHER" id="PTHR11435">
    <property type="entry name" value="NADH UBIQUINONE OXIDOREDUCTASE SUBUNIT ND6"/>
    <property type="match status" value="1"/>
</dbReference>
<dbReference type="PANTHER" id="PTHR11435:SF1">
    <property type="entry name" value="NADH-UBIQUINONE OXIDOREDUCTASE CHAIN 6"/>
    <property type="match status" value="1"/>
</dbReference>
<dbReference type="Pfam" id="PF00499">
    <property type="entry name" value="Oxidored_q3"/>
    <property type="match status" value="1"/>
</dbReference>
<proteinExistence type="inferred from homology"/>
<evidence type="ECO:0000250" key="1">
    <source>
        <dbReference type="UniProtKB" id="P03923"/>
    </source>
</evidence>
<evidence type="ECO:0000250" key="2">
    <source>
        <dbReference type="UniProtKB" id="P03924"/>
    </source>
</evidence>
<evidence type="ECO:0000255" key="3"/>
<evidence type="ECO:0000305" key="4"/>
<protein>
    <recommendedName>
        <fullName>NADH-ubiquinone oxidoreductase chain 6</fullName>
        <ecNumber evidence="1">7.1.1.2</ecNumber>
    </recommendedName>
    <alternativeName>
        <fullName>NADH dehydrogenase subunit 6</fullName>
    </alternativeName>
</protein>
<sequence>MMAYIGFILSIMFVISFVGFSSKPSPIYGGLVLIMSGGFGCGIVMSFGGSFLGLMVFLIYLGGMLVVFGYTTAMATEQYPEVWVSSAAVLGAFVLGVLMEVVLVLYVYKNGEVEVVFNFSGVGDWAVSDNGGFGVFSEEIVGVSALYSYGVWIIIVTGWSLFVGVLVILEITRGA</sequence>
<gene>
    <name type="primary">MT-ND6</name>
    <name type="synonym">MTND6</name>
    <name type="synonym">NADH6</name>
    <name type="synonym">ND6</name>
</gene>
<name>NU6M_CERSI</name>